<gene>
    <name evidence="1" type="primary">rplP</name>
    <name type="ordered locus">Rsph17025_2527</name>
</gene>
<name>RL16_CERS5</name>
<organism>
    <name type="scientific">Cereibacter sphaeroides (strain ATCC 17025 / ATH 2.4.3)</name>
    <name type="common">Rhodobacter sphaeroides</name>
    <dbReference type="NCBI Taxonomy" id="349102"/>
    <lineage>
        <taxon>Bacteria</taxon>
        <taxon>Pseudomonadati</taxon>
        <taxon>Pseudomonadota</taxon>
        <taxon>Alphaproteobacteria</taxon>
        <taxon>Rhodobacterales</taxon>
        <taxon>Paracoccaceae</taxon>
        <taxon>Cereibacter</taxon>
    </lineage>
</organism>
<dbReference type="EMBL" id="CP000661">
    <property type="protein sequence ID" value="ABP71415.1"/>
    <property type="molecule type" value="Genomic_DNA"/>
</dbReference>
<dbReference type="SMR" id="A4WVK1"/>
<dbReference type="STRING" id="349102.Rsph17025_2527"/>
<dbReference type="KEGG" id="rsq:Rsph17025_2527"/>
<dbReference type="eggNOG" id="COG0197">
    <property type="taxonomic scope" value="Bacteria"/>
</dbReference>
<dbReference type="HOGENOM" id="CLU_078858_2_1_5"/>
<dbReference type="BioCyc" id="RSPH349102:G1G8M-2605-MONOMER"/>
<dbReference type="GO" id="GO:0022625">
    <property type="term" value="C:cytosolic large ribosomal subunit"/>
    <property type="evidence" value="ECO:0007669"/>
    <property type="project" value="TreeGrafter"/>
</dbReference>
<dbReference type="GO" id="GO:0019843">
    <property type="term" value="F:rRNA binding"/>
    <property type="evidence" value="ECO:0007669"/>
    <property type="project" value="UniProtKB-UniRule"/>
</dbReference>
<dbReference type="GO" id="GO:0003735">
    <property type="term" value="F:structural constituent of ribosome"/>
    <property type="evidence" value="ECO:0007669"/>
    <property type="project" value="InterPro"/>
</dbReference>
<dbReference type="GO" id="GO:0000049">
    <property type="term" value="F:tRNA binding"/>
    <property type="evidence" value="ECO:0007669"/>
    <property type="project" value="UniProtKB-KW"/>
</dbReference>
<dbReference type="GO" id="GO:0006412">
    <property type="term" value="P:translation"/>
    <property type="evidence" value="ECO:0007669"/>
    <property type="project" value="UniProtKB-UniRule"/>
</dbReference>
<dbReference type="CDD" id="cd01433">
    <property type="entry name" value="Ribosomal_L16_L10e"/>
    <property type="match status" value="1"/>
</dbReference>
<dbReference type="FunFam" id="3.90.1170.10:FF:000001">
    <property type="entry name" value="50S ribosomal protein L16"/>
    <property type="match status" value="1"/>
</dbReference>
<dbReference type="Gene3D" id="3.90.1170.10">
    <property type="entry name" value="Ribosomal protein L10e/L16"/>
    <property type="match status" value="1"/>
</dbReference>
<dbReference type="HAMAP" id="MF_01342">
    <property type="entry name" value="Ribosomal_uL16"/>
    <property type="match status" value="1"/>
</dbReference>
<dbReference type="InterPro" id="IPR047873">
    <property type="entry name" value="Ribosomal_uL16"/>
</dbReference>
<dbReference type="InterPro" id="IPR000114">
    <property type="entry name" value="Ribosomal_uL16_bact-type"/>
</dbReference>
<dbReference type="InterPro" id="IPR020798">
    <property type="entry name" value="Ribosomal_uL16_CS"/>
</dbReference>
<dbReference type="InterPro" id="IPR016180">
    <property type="entry name" value="Ribosomal_uL16_dom"/>
</dbReference>
<dbReference type="InterPro" id="IPR036920">
    <property type="entry name" value="Ribosomal_uL16_sf"/>
</dbReference>
<dbReference type="NCBIfam" id="TIGR01164">
    <property type="entry name" value="rplP_bact"/>
    <property type="match status" value="1"/>
</dbReference>
<dbReference type="PANTHER" id="PTHR12220">
    <property type="entry name" value="50S/60S RIBOSOMAL PROTEIN L16"/>
    <property type="match status" value="1"/>
</dbReference>
<dbReference type="PANTHER" id="PTHR12220:SF13">
    <property type="entry name" value="LARGE RIBOSOMAL SUBUNIT PROTEIN UL16M"/>
    <property type="match status" value="1"/>
</dbReference>
<dbReference type="Pfam" id="PF00252">
    <property type="entry name" value="Ribosomal_L16"/>
    <property type="match status" value="1"/>
</dbReference>
<dbReference type="PRINTS" id="PR00060">
    <property type="entry name" value="RIBOSOMALL16"/>
</dbReference>
<dbReference type="SUPFAM" id="SSF54686">
    <property type="entry name" value="Ribosomal protein L16p/L10e"/>
    <property type="match status" value="1"/>
</dbReference>
<dbReference type="PROSITE" id="PS00586">
    <property type="entry name" value="RIBOSOMAL_L16_1"/>
    <property type="match status" value="1"/>
</dbReference>
<dbReference type="PROSITE" id="PS00701">
    <property type="entry name" value="RIBOSOMAL_L16_2"/>
    <property type="match status" value="1"/>
</dbReference>
<comment type="function">
    <text evidence="1">Binds 23S rRNA and is also seen to make contacts with the A and possibly P site tRNAs.</text>
</comment>
<comment type="subunit">
    <text evidence="1">Part of the 50S ribosomal subunit.</text>
</comment>
<comment type="similarity">
    <text evidence="1">Belongs to the universal ribosomal protein uL16 family.</text>
</comment>
<keyword id="KW-0687">Ribonucleoprotein</keyword>
<keyword id="KW-0689">Ribosomal protein</keyword>
<keyword id="KW-0694">RNA-binding</keyword>
<keyword id="KW-0699">rRNA-binding</keyword>
<keyword id="KW-0820">tRNA-binding</keyword>
<feature type="chain" id="PRO_1000054690" description="Large ribosomal subunit protein uL16">
    <location>
        <begin position="1"/>
        <end position="137"/>
    </location>
</feature>
<protein>
    <recommendedName>
        <fullName evidence="1">Large ribosomal subunit protein uL16</fullName>
    </recommendedName>
    <alternativeName>
        <fullName evidence="2">50S ribosomal protein L16</fullName>
    </alternativeName>
</protein>
<accession>A4WVK1</accession>
<proteinExistence type="inferred from homology"/>
<reference key="1">
    <citation type="submission" date="2007-04" db="EMBL/GenBank/DDBJ databases">
        <title>Complete sequence of chromosome of Rhodobacter sphaeroides ATCC 17025.</title>
        <authorList>
            <consortium name="US DOE Joint Genome Institute"/>
            <person name="Copeland A."/>
            <person name="Lucas S."/>
            <person name="Lapidus A."/>
            <person name="Barry K."/>
            <person name="Detter J.C."/>
            <person name="Glavina del Rio T."/>
            <person name="Hammon N."/>
            <person name="Israni S."/>
            <person name="Dalin E."/>
            <person name="Tice H."/>
            <person name="Pitluck S."/>
            <person name="Chertkov O."/>
            <person name="Brettin T."/>
            <person name="Bruce D."/>
            <person name="Han C."/>
            <person name="Schmutz J."/>
            <person name="Larimer F."/>
            <person name="Land M."/>
            <person name="Hauser L."/>
            <person name="Kyrpides N."/>
            <person name="Kim E."/>
            <person name="Richardson P."/>
            <person name="Mackenzie C."/>
            <person name="Choudhary M."/>
            <person name="Donohue T.J."/>
            <person name="Kaplan S."/>
        </authorList>
    </citation>
    <scope>NUCLEOTIDE SEQUENCE [LARGE SCALE GENOMIC DNA]</scope>
    <source>
        <strain>ATCC 17025 / ATH 2.4.3</strain>
    </source>
</reference>
<sequence>MLQPKRTKFRKQHKGRIHGEAKGGFLLNFGGFGLKATEPERVTARQIEAARRAITRHMKRQGRVWIRIFPDTPVTSKPTEVRMGKGKGSVDFWAAKVKPGRIMFEIDGVSETIAREALRLGAMKLPITTRIVVREDW</sequence>
<evidence type="ECO:0000255" key="1">
    <source>
        <dbReference type="HAMAP-Rule" id="MF_01342"/>
    </source>
</evidence>
<evidence type="ECO:0000305" key="2"/>